<organism>
    <name type="scientific">Oryctolagus cuniculus</name>
    <name type="common">Rabbit</name>
    <dbReference type="NCBI Taxonomy" id="9986"/>
    <lineage>
        <taxon>Eukaryota</taxon>
        <taxon>Metazoa</taxon>
        <taxon>Chordata</taxon>
        <taxon>Craniata</taxon>
        <taxon>Vertebrata</taxon>
        <taxon>Euteleostomi</taxon>
        <taxon>Mammalia</taxon>
        <taxon>Eutheria</taxon>
        <taxon>Euarchontoglires</taxon>
        <taxon>Glires</taxon>
        <taxon>Lagomorpha</taxon>
        <taxon>Leporidae</taxon>
        <taxon>Oryctolagus</taxon>
    </lineage>
</organism>
<sequence>MELFWSIVFTVLLSFSCRGSDWESDSNFISAAGPLTTDLLLSLQYPQGNQTSDFAAGGKDLYVCSQPLPAFLPEYFSSLRASEITHYKVFLSWAQLLPAGHSGDPDGNAVRCYRQLLEALRAAQLQPMVVLHHQHLPASSALRSAVFADLFAEYATFAFHAFGDLVGVWLTFSDLEAAIRELPQPESRASRLQLLTEAHRKAYEIYHQKYAAQGGKVSVVLQAEEISELLLESSTSALAKDSIDFLSLDLSYECQSEMSLPEKLSKLQTIEPKVKVFIFTLRLQDCPSSRKSPASLLFSFIEAINKDQVLTLGFDVNAFLNCSSTSKKSISCFLTDSLALQTDHERAARNSAPVSTYQRVWEMFAHQPRAERDAFLQDTFPQGFLWGVSTGAFNVEGGWAEGGRGPSVWDQFGHLKAAQGQATPEVASDSYYKWASDVALLRGLRAQVYKFSISWSRIFPMGRGSSPSPQGVAYYNKLIDSLLDSHIEPMATLFHWDLPQALQDEGGWQNESVVDAFVDYAAFCFSAFGNRVKLWVTFHEPWVMSYAGYGTGQHAPGISDPGIASFQVAHLVLKAHARTWHHYNSHHRPQQQGRVGIVLNSDWAEPLSPERPEDLAASERFLHFMLGWFAHPIFVDGDYPATMKAQIQQRNEQCPSPVAQLPEFTDTEKQLLKGSADFLGLSHYTSRLISKAPEDSCIPSYDTIGGFSQHTDPAWPQTSSPWIRVVPWGIRRLLQFVSLEYTKGKVPIYLAGNGMPIGESENLLSDSLRVDYFNQYINEVLKAIKEDSVDVRSYIARSLMDGFEGPAGYSQRFGLYHVNFNESSKPRTPRKSAFLLTSIIEKNGFLTKAVKQPLPPNSAHLPSKTRASALPSEVPSKAKVVWEKFSNQTKFERDLFYHGTFRDDFLWGVSSSAYQIEGAWDADGKGPSIWDNFTHTPGNGVTDNSTGDIACDSYNQLDADLNVLRALKVKAYRFSLSWSRIFPTGTNSSINSHGVDYYNRLIDGLLASDIFPMVTLFHWDLPQALQDIGGWENPSLIDLFDSYADYCFQTFGDRVKFWITFNEPTYYSWWSYGSGTFPPNVNDPGWAPYRISHALIKAHARVYHTYDEKYRQSQNGVISLSLVAQWAEPKSPDVLRDVEAADRKMQFTLGWYAHPIFKTGDYPDAMKWKVGNRSELQHLATSRLPSFTEEEKSYIRGTADVFCLNTYSSKIVQHKTPALNPPSYEDDQELAEEEDTSWPTTAMNRAASFGMRRLLNWIKEEYGDIPIYITENGVGLTNPRLEDIDRIFYYKTYINEALKAYRLDGVNLRGYFAWSLMDNFEWLQGYTIKFGLYHVDFENVNRPRTARISASYYTELITNNGMPLPSEDEFVYGQFPEGFVWSTSTAAFQIEGAWRADGKGLGIWDTFTHTRLKIENDDIADVACDSYHKISEDVVALQNLAVTHYRFSISWSRILPDGTTNYINEAGLNYYVRLIDALLAANIKPQVTMYHFDLPQALQDVGGWENETIVQRFKEYADVLFQRLGDKVKFWITLNEPFVVAYHGYGTGLYAPGIYFRPGTAPYIVGHNLIKAHAEAWHLYNDVYRASQGGVISITISSDWAEPRDPSNQEDVEAAKRYVQFMGGWFAHPIFKNGDYNEVMKTQIRERSLAAGLNESRLPEFTESEKRRINGTYDFFGFNHYTTVLAYNFNYPSIMSTVDADRGVASIVDRSWPGSGSYWLKMTPFGFRRILNWIKEEYNNPPIYVTENGVSHRGDSYLNDTTRIYYLRSYINEALKAVQQDKVDLRGYTVWTLMDNFEWYTGFSDKFGLHFVNYSDPSLPRIPRESAKFYASIVRCNGFPDPAEGPHPCLLQPEDTDPTMSPVSQEEVQFLGLSLGSTEAETALYVLFSLMLLGVCGLAFLSYALCKSSKQRKKLSQQELSPVSSF</sequence>
<dbReference type="EC" id="3.2.1.108" evidence="7"/>
<dbReference type="EC" id="3.2.1.62" evidence="2"/>
<dbReference type="EMBL" id="X07995">
    <property type="protein sequence ID" value="CAA30802.1"/>
    <property type="molecule type" value="mRNA"/>
</dbReference>
<dbReference type="PIR" id="S01169">
    <property type="entry name" value="S01169"/>
</dbReference>
<dbReference type="RefSeq" id="NP_001095159.1">
    <property type="nucleotide sequence ID" value="NM_001101689.1"/>
</dbReference>
<dbReference type="SMR" id="P09849"/>
<dbReference type="FunCoup" id="P09849">
    <property type="interactions" value="3"/>
</dbReference>
<dbReference type="STRING" id="9986.ENSOCUP00000032427"/>
<dbReference type="CAZy" id="GH1">
    <property type="family name" value="Glycoside Hydrolase Family 1"/>
</dbReference>
<dbReference type="GlyCosmos" id="P09849">
    <property type="glycosylation" value="15 sites, No reported glycans"/>
</dbReference>
<dbReference type="PaxDb" id="9986-ENSOCUP00000015999"/>
<dbReference type="Ensembl" id="ENSOCUT00000031459.2">
    <property type="protein sequence ID" value="ENSOCUP00000015999.2"/>
    <property type="gene ID" value="ENSOCUG00000027277.3"/>
</dbReference>
<dbReference type="GeneID" id="100009256"/>
<dbReference type="KEGG" id="ocu:100009256"/>
<dbReference type="CTD" id="100009256"/>
<dbReference type="eggNOG" id="KOG0626">
    <property type="taxonomic scope" value="Eukaryota"/>
</dbReference>
<dbReference type="GeneTree" id="ENSGT00940000155324"/>
<dbReference type="InParanoid" id="P09849"/>
<dbReference type="OrthoDB" id="65569at2759"/>
<dbReference type="Proteomes" id="UP000001811">
    <property type="component" value="Chromosome 7"/>
</dbReference>
<dbReference type="Bgee" id="ENSOCUG00000027277">
    <property type="expression patterns" value="Expressed in embryo and 17 other cell types or tissues"/>
</dbReference>
<dbReference type="ExpressionAtlas" id="P09849">
    <property type="expression patterns" value="baseline"/>
</dbReference>
<dbReference type="GO" id="GO:0098591">
    <property type="term" value="C:external side of apical plasma membrane"/>
    <property type="evidence" value="ECO:0000250"/>
    <property type="project" value="UniProtKB"/>
</dbReference>
<dbReference type="GO" id="GO:0008422">
    <property type="term" value="F:beta-glucosidase activity"/>
    <property type="evidence" value="ECO:0000250"/>
    <property type="project" value="UniProtKB"/>
</dbReference>
<dbReference type="GO" id="GO:0080079">
    <property type="term" value="F:cellobiose glucosidase activity"/>
    <property type="evidence" value="ECO:0007669"/>
    <property type="project" value="RHEA"/>
</dbReference>
<dbReference type="GO" id="GO:0004336">
    <property type="term" value="F:galactosylceramidase activity"/>
    <property type="evidence" value="ECO:0000250"/>
    <property type="project" value="UniProtKB"/>
</dbReference>
<dbReference type="GO" id="GO:0004348">
    <property type="term" value="F:glucosylceramidase activity"/>
    <property type="evidence" value="ECO:0000250"/>
    <property type="project" value="UniProtKB"/>
</dbReference>
<dbReference type="GO" id="GO:0000016">
    <property type="term" value="F:lactase activity"/>
    <property type="evidence" value="ECO:0000314"/>
    <property type="project" value="UniProtKB"/>
</dbReference>
<dbReference type="GO" id="GO:0140749">
    <property type="term" value="F:phlorizin hydrolase activity"/>
    <property type="evidence" value="ECO:0000250"/>
    <property type="project" value="UniProtKB"/>
</dbReference>
<dbReference type="GO" id="GO:0042803">
    <property type="term" value="F:protein homodimerization activity"/>
    <property type="evidence" value="ECO:0000250"/>
    <property type="project" value="UniProtKB"/>
</dbReference>
<dbReference type="GO" id="GO:2000892">
    <property type="term" value="P:cellobiose catabolic process"/>
    <property type="evidence" value="ECO:0000250"/>
    <property type="project" value="UniProtKB"/>
</dbReference>
<dbReference type="GO" id="GO:0046477">
    <property type="term" value="P:glycosylceramide catabolic process"/>
    <property type="evidence" value="ECO:0000250"/>
    <property type="project" value="UniProtKB"/>
</dbReference>
<dbReference type="GO" id="GO:0005990">
    <property type="term" value="P:lactose catabolic process"/>
    <property type="evidence" value="ECO:0000250"/>
    <property type="project" value="UniProtKB"/>
</dbReference>
<dbReference type="GO" id="GO:1901733">
    <property type="term" value="P:quercetin catabolic process"/>
    <property type="evidence" value="ECO:0000250"/>
    <property type="project" value="UniProtKB"/>
</dbReference>
<dbReference type="FunFam" id="3.20.20.80:FF:000117">
    <property type="entry name" value="Lactase"/>
    <property type="match status" value="1"/>
</dbReference>
<dbReference type="FunFam" id="3.20.20.80:FF:000013">
    <property type="entry name" value="lactase-phlorizin hydrolase"/>
    <property type="match status" value="3"/>
</dbReference>
<dbReference type="Gene3D" id="3.20.20.80">
    <property type="entry name" value="Glycosidases"/>
    <property type="match status" value="4"/>
</dbReference>
<dbReference type="InterPro" id="IPR001360">
    <property type="entry name" value="Glyco_hydro_1"/>
</dbReference>
<dbReference type="InterPro" id="IPR018120">
    <property type="entry name" value="Glyco_hydro_1_AS"/>
</dbReference>
<dbReference type="InterPro" id="IPR033132">
    <property type="entry name" value="Glyco_hydro_1_N_CS"/>
</dbReference>
<dbReference type="InterPro" id="IPR017853">
    <property type="entry name" value="Glycoside_hydrolase_SF"/>
</dbReference>
<dbReference type="PANTHER" id="PTHR10353">
    <property type="entry name" value="GLYCOSYL HYDROLASE"/>
    <property type="match status" value="1"/>
</dbReference>
<dbReference type="PANTHER" id="PTHR10353:SF36">
    <property type="entry name" value="LP05116P"/>
    <property type="match status" value="1"/>
</dbReference>
<dbReference type="Pfam" id="PF00232">
    <property type="entry name" value="Glyco_hydro_1"/>
    <property type="match status" value="4"/>
</dbReference>
<dbReference type="PRINTS" id="PR00131">
    <property type="entry name" value="GLHYDRLASE1"/>
</dbReference>
<dbReference type="SUPFAM" id="SSF51445">
    <property type="entry name" value="(Trans)glycosidases"/>
    <property type="match status" value="4"/>
</dbReference>
<dbReference type="PROSITE" id="PS00572">
    <property type="entry name" value="GLYCOSYL_HYDROL_F1_1"/>
    <property type="match status" value="2"/>
</dbReference>
<dbReference type="PROSITE" id="PS00653">
    <property type="entry name" value="GLYCOSYL_HYDROL_F1_2"/>
    <property type="match status" value="3"/>
</dbReference>
<protein>
    <recommendedName>
        <fullName evidence="13">Lactase/phlorizin hydrolase</fullName>
    </recommendedName>
    <alternativeName>
        <fullName evidence="13">Lactase/glycosylceramidase</fullName>
    </alternativeName>
    <domain>
        <recommendedName>
            <fullName evidence="13">Lactase</fullName>
            <ecNumber evidence="7">3.2.1.108</ecNumber>
        </recommendedName>
    </domain>
    <domain>
        <recommendedName>
            <fullName evidence="2">Glycosylceramidase</fullName>
            <ecNumber evidence="2">3.2.1.62</ecNumber>
        </recommendedName>
        <alternativeName>
            <fullName evidence="10">Phlorizin hydrolase</fullName>
        </alternativeName>
    </domain>
</protein>
<proteinExistence type="evidence at protein level"/>
<comment type="function">
    <text evidence="7">Broad specificity glycosidase of the intestinal brush border membrane that hydrolyzes lactose, the main sugar in mammalian milk, to produce D-glucose and D-galactose (PubMed:1388157). The mature protein is composed of two domains that catalyze the hydrolysis of beta-glucopyranosides and beta-galactopyranosides, with a preference for hydrophilic aglycones (in lactose and cellobiose) for one domain and hydrophobic aglycones (in phlorizin and glycosylceramides) for the other (PubMed:1388157).</text>
</comment>
<comment type="catalytic activity">
    <reaction evidence="7">
        <text>lactose + H2O = beta-D-galactose + D-glucose</text>
        <dbReference type="Rhea" id="RHEA:10076"/>
        <dbReference type="ChEBI" id="CHEBI:4167"/>
        <dbReference type="ChEBI" id="CHEBI:15377"/>
        <dbReference type="ChEBI" id="CHEBI:17716"/>
        <dbReference type="ChEBI" id="CHEBI:27667"/>
        <dbReference type="EC" id="3.2.1.108"/>
    </reaction>
    <physiologicalReaction direction="left-to-right" evidence="7">
        <dbReference type="Rhea" id="RHEA:10077"/>
    </physiologicalReaction>
</comment>
<comment type="catalytic activity">
    <reaction evidence="1">
        <text>phlorizin + H2O = phloretin + beta-D-glucose</text>
        <dbReference type="Rhea" id="RHEA:69639"/>
        <dbReference type="ChEBI" id="CHEBI:8113"/>
        <dbReference type="ChEBI" id="CHEBI:15377"/>
        <dbReference type="ChEBI" id="CHEBI:15903"/>
        <dbReference type="ChEBI" id="CHEBI:17276"/>
    </reaction>
    <physiologicalReaction direction="left-to-right" evidence="1">
        <dbReference type="Rhea" id="RHEA:69640"/>
    </physiologicalReaction>
</comment>
<comment type="catalytic activity">
    <reaction evidence="1">
        <text>D-cellobiose + H2O = beta-D-glucose + D-glucose</text>
        <dbReference type="Rhea" id="RHEA:30679"/>
        <dbReference type="ChEBI" id="CHEBI:4167"/>
        <dbReference type="ChEBI" id="CHEBI:15377"/>
        <dbReference type="ChEBI" id="CHEBI:15903"/>
        <dbReference type="ChEBI" id="CHEBI:17057"/>
    </reaction>
    <physiologicalReaction direction="left-to-right" evidence="1">
        <dbReference type="Rhea" id="RHEA:30680"/>
    </physiologicalReaction>
</comment>
<comment type="catalytic activity">
    <reaction evidence="1">
        <text>quercetin 4'-O-beta-D-glucoside + H2O = quercetin + beta-D-glucose</text>
        <dbReference type="Rhea" id="RHEA:69647"/>
        <dbReference type="ChEBI" id="CHEBI:15377"/>
        <dbReference type="ChEBI" id="CHEBI:15903"/>
        <dbReference type="ChEBI" id="CHEBI:57694"/>
        <dbReference type="ChEBI" id="CHEBI:187902"/>
    </reaction>
    <physiologicalReaction direction="left-to-right" evidence="1">
        <dbReference type="Rhea" id="RHEA:69648"/>
    </physiologicalReaction>
</comment>
<comment type="catalytic activity">
    <reaction evidence="1">
        <text>quercetin 3-O-beta-D-glucoside + H2O = quercetin + beta-D-glucose</text>
        <dbReference type="Rhea" id="RHEA:69655"/>
        <dbReference type="ChEBI" id="CHEBI:15377"/>
        <dbReference type="ChEBI" id="CHEBI:15903"/>
        <dbReference type="ChEBI" id="CHEBI:57694"/>
        <dbReference type="ChEBI" id="CHEBI:144437"/>
    </reaction>
    <physiologicalReaction direction="left-to-right" evidence="1">
        <dbReference type="Rhea" id="RHEA:69656"/>
    </physiologicalReaction>
</comment>
<comment type="catalytic activity">
    <reaction evidence="3">
        <text>kaempferol 3-O-beta-D-glucoside + H2O = kaempferol + beta-D-glucose</text>
        <dbReference type="Rhea" id="RHEA:69659"/>
        <dbReference type="ChEBI" id="CHEBI:15377"/>
        <dbReference type="ChEBI" id="CHEBI:15903"/>
        <dbReference type="ChEBI" id="CHEBI:58573"/>
        <dbReference type="ChEBI" id="CHEBI:169942"/>
    </reaction>
    <physiologicalReaction direction="left-to-right" evidence="3">
        <dbReference type="Rhea" id="RHEA:69660"/>
    </physiologicalReaction>
</comment>
<comment type="catalytic activity">
    <reaction evidence="3">
        <text>luteolin 7-O-beta-D-glucoside + H2O = luteolin + beta-D-glucose</text>
        <dbReference type="Rhea" id="RHEA:69663"/>
        <dbReference type="ChEBI" id="CHEBI:15377"/>
        <dbReference type="ChEBI" id="CHEBI:15903"/>
        <dbReference type="ChEBI" id="CHEBI:57545"/>
        <dbReference type="ChEBI" id="CHEBI:77791"/>
    </reaction>
    <physiologicalReaction direction="left-to-right" evidence="3">
        <dbReference type="Rhea" id="RHEA:69664"/>
    </physiologicalReaction>
</comment>
<comment type="catalytic activity">
    <reaction evidence="3">
        <text>luteolin 4'-O-beta-D-glucoside + H2O = luteolin + beta-D-glucose</text>
        <dbReference type="Rhea" id="RHEA:69667"/>
        <dbReference type="ChEBI" id="CHEBI:15377"/>
        <dbReference type="ChEBI" id="CHEBI:15903"/>
        <dbReference type="ChEBI" id="CHEBI:57545"/>
        <dbReference type="ChEBI" id="CHEBI:187903"/>
    </reaction>
    <physiologicalReaction direction="left-to-right" evidence="3">
        <dbReference type="Rhea" id="RHEA:69668"/>
    </physiologicalReaction>
</comment>
<comment type="catalytic activity">
    <reaction evidence="3">
        <text>(2S)-naringenin 7-O-beta-D-glucoside + H2O = (2S)-naringenin + beta-D-glucose</text>
        <dbReference type="Rhea" id="RHEA:69671"/>
        <dbReference type="ChEBI" id="CHEBI:15377"/>
        <dbReference type="ChEBI" id="CHEBI:15903"/>
        <dbReference type="ChEBI" id="CHEBI:17846"/>
        <dbReference type="ChEBI" id="CHEBI:28327"/>
    </reaction>
    <physiologicalReaction direction="left-to-right" evidence="3">
        <dbReference type="Rhea" id="RHEA:69672"/>
    </physiologicalReaction>
</comment>
<comment type="catalytic activity">
    <reaction evidence="3">
        <text>eriodictyol-7-O-beta-D-glucoside + H2O = (S)-eriodictyol + beta-D-glucose</text>
        <dbReference type="Rhea" id="RHEA:69675"/>
        <dbReference type="ChEBI" id="CHEBI:15377"/>
        <dbReference type="ChEBI" id="CHEBI:15903"/>
        <dbReference type="ChEBI" id="CHEBI:28412"/>
        <dbReference type="ChEBI" id="CHEBI:139458"/>
    </reaction>
    <physiologicalReaction direction="left-to-right" evidence="3">
        <dbReference type="Rhea" id="RHEA:69676"/>
    </physiologicalReaction>
</comment>
<comment type="catalytic activity">
    <reaction evidence="3">
        <text>apigenin 7-O-beta-D-glucoside + H2O = apigenin + beta-D-glucose</text>
        <dbReference type="Rhea" id="RHEA:69679"/>
        <dbReference type="ChEBI" id="CHEBI:15377"/>
        <dbReference type="ChEBI" id="CHEBI:15903"/>
        <dbReference type="ChEBI" id="CHEBI:58470"/>
        <dbReference type="ChEBI" id="CHEBI:77722"/>
    </reaction>
    <physiologicalReaction direction="left-to-right" evidence="3">
        <dbReference type="Rhea" id="RHEA:69680"/>
    </physiologicalReaction>
</comment>
<comment type="catalytic activity">
    <reaction evidence="3">
        <text>daidzein 7-O-beta-D-glucoside + H2O = daidzein + beta-D-glucose + H(+)</text>
        <dbReference type="Rhea" id="RHEA:69683"/>
        <dbReference type="ChEBI" id="CHEBI:15377"/>
        <dbReference type="ChEBI" id="CHEBI:15378"/>
        <dbReference type="ChEBI" id="CHEBI:15903"/>
        <dbReference type="ChEBI" id="CHEBI:42202"/>
        <dbReference type="ChEBI" id="CHEBI:77764"/>
    </reaction>
    <physiologicalReaction direction="left-to-right" evidence="3">
        <dbReference type="Rhea" id="RHEA:69684"/>
    </physiologicalReaction>
</comment>
<comment type="catalytic activity">
    <reaction evidence="3">
        <text>genistein 7-O-beta-D-glucoside + H2O = genistein + beta-D-glucose</text>
        <dbReference type="Rhea" id="RHEA:69687"/>
        <dbReference type="ChEBI" id="CHEBI:15377"/>
        <dbReference type="ChEBI" id="CHEBI:15903"/>
        <dbReference type="ChEBI" id="CHEBI:74224"/>
        <dbReference type="ChEBI" id="CHEBI:140305"/>
    </reaction>
    <physiologicalReaction direction="left-to-right" evidence="3">
        <dbReference type="Rhea" id="RHEA:69688"/>
    </physiologicalReaction>
</comment>
<comment type="catalytic activity">
    <reaction evidence="2">
        <text>a beta-D-galactosyl-N-acylsphingosine + H2O = a ceramide + beta-D-galactose.</text>
        <dbReference type="EC" id="3.2.1.62"/>
    </reaction>
</comment>
<comment type="catalytic activity">
    <reaction evidence="2">
        <text>beta-D-glucosyl-(1&lt;-&gt;1')-N-hexadecanoylsphing-4-enine + H2O = N-hexadecanoylsphing-4-enine + beta-D-glucose</text>
        <dbReference type="Rhea" id="RHEA:69699"/>
        <dbReference type="ChEBI" id="CHEBI:15377"/>
        <dbReference type="ChEBI" id="CHEBI:15903"/>
        <dbReference type="ChEBI" id="CHEBI:72959"/>
        <dbReference type="ChEBI" id="CHEBI:84716"/>
    </reaction>
    <physiologicalReaction direction="left-to-right" evidence="2">
        <dbReference type="Rhea" id="RHEA:69700"/>
    </physiologicalReaction>
</comment>
<comment type="catalytic activity">
    <reaction evidence="2">
        <text>beta-D-galactosyl-(1&lt;-&gt;1')-N-hexadecanoylsphing-4-enine + H2O = beta-D-galactose + N-hexadecanoylsphing-4-enine</text>
        <dbReference type="Rhea" id="RHEA:69703"/>
        <dbReference type="ChEBI" id="CHEBI:15377"/>
        <dbReference type="ChEBI" id="CHEBI:27667"/>
        <dbReference type="ChEBI" id="CHEBI:72959"/>
        <dbReference type="ChEBI" id="CHEBI:83259"/>
    </reaction>
    <physiologicalReaction direction="left-to-right" evidence="2">
        <dbReference type="Rhea" id="RHEA:69704"/>
    </physiologicalReaction>
</comment>
<comment type="catalytic activity">
    <reaction evidence="2">
        <text>beta-D-galactosyl-(1&lt;-&gt;1')-N-hexadecanoylsphinganine + H2O = N-hexadecanoylsphinganine + beta-D-galactose</text>
        <dbReference type="Rhea" id="RHEA:69707"/>
        <dbReference type="ChEBI" id="CHEBI:15377"/>
        <dbReference type="ChEBI" id="CHEBI:27667"/>
        <dbReference type="ChEBI" id="CHEBI:67042"/>
        <dbReference type="ChEBI" id="CHEBI:84783"/>
    </reaction>
    <physiologicalReaction direction="left-to-right" evidence="2">
        <dbReference type="Rhea" id="RHEA:69708"/>
    </physiologicalReaction>
</comment>
<comment type="catalytic activity">
    <reaction evidence="2">
        <text>beta-D-glucosyl-(1&lt;-&gt;1')-N-hexadecanoylsphinganine + H2O = N-hexadecanoylsphinganine + beta-D-glucose</text>
        <dbReference type="Rhea" id="RHEA:69711"/>
        <dbReference type="ChEBI" id="CHEBI:15377"/>
        <dbReference type="ChEBI" id="CHEBI:15903"/>
        <dbReference type="ChEBI" id="CHEBI:67042"/>
        <dbReference type="ChEBI" id="CHEBI:84782"/>
    </reaction>
    <physiologicalReaction direction="left-to-right" evidence="2">
        <dbReference type="Rhea" id="RHEA:69712"/>
    </physiologicalReaction>
</comment>
<comment type="subunit">
    <text evidence="1">Homodimer.</text>
</comment>
<comment type="subcellular location">
    <subcellularLocation>
        <location evidence="7">Apical cell membrane</location>
        <topology evidence="7">Single-pass type I membrane protein</topology>
    </subcellularLocation>
    <text evidence="7">Brush border.</text>
</comment>
<comment type="tissue specificity">
    <text evidence="7 8">Specifically expressed in small intestine.</text>
</comment>
<comment type="domain">
    <text evidence="1 7 9">The glycosyl hydrolase-1 3/region III carries the phlorizin hydrolase/glycosylceramidase activities (By similarity). The initial assignment of the activities to different regions was revised by the authors using alternative approaches (PubMed:1388157, PubMed:9762914).</text>
</comment>
<comment type="domain">
    <text evidence="1 7 9">The glycosyl hydrolase-1 4/region IV carries the lactase activity (By similarity). The initial assignment of the activities to different regions was revised by the authors using alternative approaches (PubMed:1388157, PubMed:9762914).</text>
</comment>
<comment type="PTM">
    <text evidence="1">N-glycosylated.</text>
</comment>
<comment type="similarity">
    <text evidence="12">Belongs to the glycosyl hydrolase 1 family.</text>
</comment>
<gene>
    <name evidence="1" type="primary">LCT</name>
    <name evidence="11" type="synonym">LPH</name>
</gene>
<accession>P09849</accession>
<name>LPH_RABIT</name>
<evidence type="ECO:0000250" key="1">
    <source>
        <dbReference type="UniProtKB" id="P09848"/>
    </source>
</evidence>
<evidence type="ECO:0000250" key="2">
    <source>
        <dbReference type="UniProtKB" id="Q02401"/>
    </source>
</evidence>
<evidence type="ECO:0000250" key="3">
    <source>
        <dbReference type="UniProtKB" id="W5PLZ6"/>
    </source>
</evidence>
<evidence type="ECO:0000255" key="4"/>
<evidence type="ECO:0000255" key="5">
    <source>
        <dbReference type="PROSITE-ProRule" id="PRU10055"/>
    </source>
</evidence>
<evidence type="ECO:0000256" key="6">
    <source>
        <dbReference type="SAM" id="MobiDB-lite"/>
    </source>
</evidence>
<evidence type="ECO:0000269" key="7">
    <source>
    </source>
</evidence>
<evidence type="ECO:0000269" key="8">
    <source>
    </source>
</evidence>
<evidence type="ECO:0000269" key="9">
    <source>
    </source>
</evidence>
<evidence type="ECO:0000303" key="10">
    <source>
    </source>
</evidence>
<evidence type="ECO:0000303" key="11">
    <source>
    </source>
</evidence>
<evidence type="ECO:0000305" key="12"/>
<evidence type="ECO:0000305" key="13">
    <source>
    </source>
</evidence>
<evidence type="ECO:0000305" key="14">
    <source>
    </source>
</evidence>
<evidence type="ECO:0000305" key="15">
    <source>
    </source>
</evidence>
<reference key="1">
    <citation type="journal article" date="1988" name="EMBO J.">
        <title>Complete primary structure of human and rabbit lactase-phlorizin hydrolase: implications for biosynthesis, membrane anchoring and evolution of the enzyme.</title>
        <authorList>
            <person name="Mantei N."/>
            <person name="Villa M."/>
            <person name="Enzler T."/>
            <person name="Wacker H."/>
            <person name="Boll W."/>
            <person name="James P."/>
            <person name="Hunziker W."/>
            <person name="Semenza G."/>
        </authorList>
    </citation>
    <scope>NUCLEOTIDE SEQUENCE [MRNA]</scope>
    <scope>PROTEIN SEQUENCE OF 867-885</scope>
    <scope>TISSUE SPECIFICITY</scope>
    <source>
        <strain>New Zealand white</strain>
    </source>
</reference>
<reference key="2">
    <citation type="journal article" date="1992" name="J. Biol. Chem.">
        <title>Location of the two catalytic sites in intestinal lactase-phlorizin hydrolase. Comparison with sucrase-isomaltase and with other glycosidases, the membrane anchor of lactase-phlorizin hydrolase.</title>
        <authorList>
            <person name="Wacker H."/>
            <person name="Keller P."/>
            <person name="Falchetto R."/>
            <person name="Legler G."/>
            <person name="Semenza G."/>
        </authorList>
    </citation>
    <scope>FUNCTION</scope>
    <scope>CATALYTIC ACTIVITY</scope>
    <scope>SUBCELLULAR LOCATION</scope>
    <scope>TOPOLOGY</scope>
    <scope>DOMAIN</scope>
    <scope>TISSUE SPECIFICITY</scope>
    <scope>REGION</scope>
    <scope>ACTIVE SITES</scope>
</reference>
<reference key="3">
    <citation type="journal article" date="1998" name="FEBS Lett.">
        <title>Intestinal lactase-phlorizin hydrolase (LPH): the two catalytic sites; the role of the pancreas in pro-LPH maturation.</title>
        <authorList>
            <person name="Zecca L."/>
            <person name="Mesonero J.E."/>
            <person name="Stutz A."/>
            <person name="Poiree J.C."/>
            <person name="Giudicelli J."/>
            <person name="Cursio R."/>
            <person name="Gloor S.M."/>
            <person name="Semenza G."/>
        </authorList>
    </citation>
    <scope>DOMAIN</scope>
</reference>
<feature type="signal peptide" evidence="4">
    <location>
        <begin position="1"/>
        <end position="19"/>
    </location>
</feature>
<feature type="propeptide" id="PRO_0000011769" description="XBetaGly" evidence="14">
    <location>
        <begin position="20"/>
        <end position="866"/>
    </location>
</feature>
<feature type="chain" id="PRO_0000011770" description="Lactase/phlorizin hydrolase" evidence="14">
    <location>
        <begin position="867"/>
        <end position="1926"/>
    </location>
</feature>
<feature type="topological domain" description="Extracellular" evidence="4">
    <location>
        <begin position="20"/>
        <end position="1882"/>
    </location>
</feature>
<feature type="transmembrane region" description="Helical" evidence="4">
    <location>
        <begin position="1883"/>
        <end position="1901"/>
    </location>
</feature>
<feature type="topological domain" description="Cytoplasmic" evidence="4">
    <location>
        <begin position="1902"/>
        <end position="1926"/>
    </location>
</feature>
<feature type="region of interest" description="Glycosyl hydrolase-1 1; Region I" evidence="4 13">
    <location>
        <begin position="44"/>
        <end position="286"/>
    </location>
</feature>
<feature type="region of interest" description="Glycosyl hydrolase-1 2; Region II" evidence="4 13">
    <location>
        <begin position="360"/>
        <end position="853"/>
    </location>
</feature>
<feature type="region of interest" description="Glycosyl hydrolase-1 3; Region III. Phlorizin hydrolase/Glycosylceramidase activity" evidence="4 13 15">
    <location>
        <begin position="900"/>
        <end position="1364"/>
    </location>
</feature>
<feature type="region of interest" description="Disordered" evidence="6">
    <location>
        <begin position="1218"/>
        <end position="1237"/>
    </location>
</feature>
<feature type="region of interest" description="Glycosyl hydrolase-1 4; Region IV. Lactase activity" evidence="4 13 15">
    <location>
        <begin position="1371"/>
        <end position="1845"/>
    </location>
</feature>
<feature type="compositionally biased region" description="Acidic residues" evidence="6">
    <location>
        <begin position="1224"/>
        <end position="1236"/>
    </location>
</feature>
<feature type="active site" description="Proton donor; for phlorizin hydrolase/Glycosylceramidase activity" evidence="13">
    <location>
        <position position="1063"/>
    </location>
</feature>
<feature type="active site" description="Nucleophile; for phlorizin hydrolase/Glycosylceramidase activity" evidence="5 7">
    <location>
        <position position="1271"/>
    </location>
</feature>
<feature type="active site" description="Proton donor; for lactase activity" evidence="13">
    <location>
        <position position="1536"/>
    </location>
</feature>
<feature type="active site" description="Nucleophile; for lactase activity" evidence="5 7">
    <location>
        <position position="1747"/>
    </location>
</feature>
<feature type="glycosylation site" description="N-linked (GlcNAc...) asparagine" evidence="4">
    <location>
        <position position="49"/>
    </location>
</feature>
<feature type="glycosylation site" description="N-linked (GlcNAc...) asparagine" evidence="4">
    <location>
        <position position="321"/>
    </location>
</feature>
<feature type="glycosylation site" description="N-linked (GlcNAc...) asparagine" evidence="4">
    <location>
        <position position="510"/>
    </location>
</feature>
<feature type="glycosylation site" description="N-linked (GlcNAc...) asparagine" evidence="4">
    <location>
        <position position="821"/>
    </location>
</feature>
<feature type="glycosylation site" description="N-linked (GlcNAc...) asparagine" evidence="4">
    <location>
        <position position="887"/>
    </location>
</feature>
<feature type="glycosylation site" description="N-linked (GlcNAc...) asparagine" evidence="4">
    <location>
        <position position="932"/>
    </location>
</feature>
<feature type="glycosylation site" description="N-linked (GlcNAc...) asparagine" evidence="4">
    <location>
        <position position="944"/>
    </location>
</feature>
<feature type="glycosylation site" description="N-linked (GlcNAc...) asparagine" evidence="4">
    <location>
        <position position="987"/>
    </location>
</feature>
<feature type="glycosylation site" description="N-linked (GlcNAc...) asparagine" evidence="4">
    <location>
        <position position="1033"/>
    </location>
</feature>
<feature type="glycosylation site" description="N-linked (GlcNAc...) asparagine" evidence="4">
    <location>
        <position position="1172"/>
    </location>
</feature>
<feature type="glycosylation site" description="N-linked (GlcNAc...) asparagine" evidence="4">
    <location>
        <position position="1506"/>
    </location>
</feature>
<feature type="glycosylation site" description="N-linked (GlcNAc...) asparagine" evidence="4">
    <location>
        <position position="1654"/>
    </location>
</feature>
<feature type="glycosylation site" description="N-linked (GlcNAc...) asparagine" evidence="4">
    <location>
        <position position="1670"/>
    </location>
</feature>
<feature type="glycosylation site" description="N-linked (GlcNAc...) asparagine" evidence="4">
    <location>
        <position position="1759"/>
    </location>
</feature>
<feature type="glycosylation site" description="N-linked (GlcNAc...) asparagine" evidence="4">
    <location>
        <position position="1813"/>
    </location>
</feature>
<keyword id="KW-1003">Cell membrane</keyword>
<keyword id="KW-0903">Direct protein sequencing</keyword>
<keyword id="KW-0325">Glycoprotein</keyword>
<keyword id="KW-0326">Glycosidase</keyword>
<keyword id="KW-0378">Hydrolase</keyword>
<keyword id="KW-0472">Membrane</keyword>
<keyword id="KW-0511">Multifunctional enzyme</keyword>
<keyword id="KW-1185">Reference proteome</keyword>
<keyword id="KW-0732">Signal</keyword>
<keyword id="KW-0812">Transmembrane</keyword>
<keyword id="KW-1133">Transmembrane helix</keyword>
<keyword id="KW-0865">Zymogen</keyword>